<reference key="1">
    <citation type="journal article" date="2000" name="Science">
        <title>Complete genome sequence of Neisseria meningitidis serogroup B strain MC58.</title>
        <authorList>
            <person name="Tettelin H."/>
            <person name="Saunders N.J."/>
            <person name="Heidelberg J.F."/>
            <person name="Jeffries A.C."/>
            <person name="Nelson K.E."/>
            <person name="Eisen J.A."/>
            <person name="Ketchum K.A."/>
            <person name="Hood D.W."/>
            <person name="Peden J.F."/>
            <person name="Dodson R.J."/>
            <person name="Nelson W.C."/>
            <person name="Gwinn M.L."/>
            <person name="DeBoy R.T."/>
            <person name="Peterson J.D."/>
            <person name="Hickey E.K."/>
            <person name="Haft D.H."/>
            <person name="Salzberg S.L."/>
            <person name="White O."/>
            <person name="Fleischmann R.D."/>
            <person name="Dougherty B.A."/>
            <person name="Mason T.M."/>
            <person name="Ciecko A."/>
            <person name="Parksey D.S."/>
            <person name="Blair E."/>
            <person name="Cittone H."/>
            <person name="Clark E.B."/>
            <person name="Cotton M.D."/>
            <person name="Utterback T.R."/>
            <person name="Khouri H.M."/>
            <person name="Qin H."/>
            <person name="Vamathevan J.J."/>
            <person name="Gill J."/>
            <person name="Scarlato V."/>
            <person name="Masignani V."/>
            <person name="Pizza M."/>
            <person name="Grandi G."/>
            <person name="Sun L."/>
            <person name="Smith H.O."/>
            <person name="Fraser C.M."/>
            <person name="Moxon E.R."/>
            <person name="Rappuoli R."/>
            <person name="Venter J.C."/>
        </authorList>
    </citation>
    <scope>NUCLEOTIDE SEQUENCE [LARGE SCALE GENOMIC DNA]</scope>
    <source>
        <strain>ATCC BAA-335 / MC58</strain>
    </source>
</reference>
<organism>
    <name type="scientific">Neisseria meningitidis serogroup B (strain ATCC BAA-335 / MC58)</name>
    <dbReference type="NCBI Taxonomy" id="122586"/>
    <lineage>
        <taxon>Bacteria</taxon>
        <taxon>Pseudomonadati</taxon>
        <taxon>Pseudomonadota</taxon>
        <taxon>Betaproteobacteria</taxon>
        <taxon>Neisseriales</taxon>
        <taxon>Neisseriaceae</taxon>
        <taxon>Neisseria</taxon>
    </lineage>
</organism>
<feature type="chain" id="PRO_0000155999" description="dCTP deaminase">
    <location>
        <begin position="1"/>
        <end position="188"/>
    </location>
</feature>
<feature type="active site" description="Proton donor/acceptor" evidence="1">
    <location>
        <position position="137"/>
    </location>
</feature>
<feature type="binding site" evidence="1">
    <location>
        <begin position="111"/>
        <end position="116"/>
    </location>
    <ligand>
        <name>dCTP</name>
        <dbReference type="ChEBI" id="CHEBI:61481"/>
    </ligand>
</feature>
<feature type="binding site" evidence="1">
    <location>
        <begin position="135"/>
        <end position="137"/>
    </location>
    <ligand>
        <name>dCTP</name>
        <dbReference type="ChEBI" id="CHEBI:61481"/>
    </ligand>
</feature>
<feature type="binding site" evidence="1">
    <location>
        <position position="156"/>
    </location>
    <ligand>
        <name>dCTP</name>
        <dbReference type="ChEBI" id="CHEBI:61481"/>
    </ligand>
</feature>
<feature type="binding site" evidence="1">
    <location>
        <position position="170"/>
    </location>
    <ligand>
        <name>dCTP</name>
        <dbReference type="ChEBI" id="CHEBI:61481"/>
    </ligand>
</feature>
<feature type="binding site" evidence="1">
    <location>
        <position position="180"/>
    </location>
    <ligand>
        <name>dCTP</name>
        <dbReference type="ChEBI" id="CHEBI:61481"/>
    </ligand>
</feature>
<gene>
    <name evidence="1" type="primary">dcd</name>
    <name type="ordered locus">NMB0849</name>
</gene>
<proteinExistence type="inferred from homology"/>
<dbReference type="EC" id="3.5.4.13" evidence="1"/>
<dbReference type="EMBL" id="AE002098">
    <property type="protein sequence ID" value="AAF41260.1"/>
    <property type="molecule type" value="Genomic_DNA"/>
</dbReference>
<dbReference type="PIR" id="D81149">
    <property type="entry name" value="D81149"/>
</dbReference>
<dbReference type="RefSeq" id="NP_273890.1">
    <property type="nucleotide sequence ID" value="NC_003112.2"/>
</dbReference>
<dbReference type="RefSeq" id="WP_002224592.1">
    <property type="nucleotide sequence ID" value="NC_003112.2"/>
</dbReference>
<dbReference type="SMR" id="P63904"/>
<dbReference type="FunCoup" id="P63904">
    <property type="interactions" value="212"/>
</dbReference>
<dbReference type="STRING" id="122586.NMB0849"/>
<dbReference type="PaxDb" id="122586-NMB0849"/>
<dbReference type="GeneID" id="93386330"/>
<dbReference type="KEGG" id="nme:NMB0849"/>
<dbReference type="PATRIC" id="fig|122586.8.peg.1063"/>
<dbReference type="HOGENOM" id="CLU_087476_4_0_4"/>
<dbReference type="InParanoid" id="P63904"/>
<dbReference type="OrthoDB" id="9780956at2"/>
<dbReference type="UniPathway" id="UPA00610">
    <property type="reaction ID" value="UER00665"/>
</dbReference>
<dbReference type="Proteomes" id="UP000000425">
    <property type="component" value="Chromosome"/>
</dbReference>
<dbReference type="GO" id="GO:0008829">
    <property type="term" value="F:dCTP deaminase activity"/>
    <property type="evidence" value="ECO:0000318"/>
    <property type="project" value="GO_Central"/>
</dbReference>
<dbReference type="GO" id="GO:0000166">
    <property type="term" value="F:nucleotide binding"/>
    <property type="evidence" value="ECO:0007669"/>
    <property type="project" value="UniProtKB-KW"/>
</dbReference>
<dbReference type="GO" id="GO:0006226">
    <property type="term" value="P:dUMP biosynthetic process"/>
    <property type="evidence" value="ECO:0007669"/>
    <property type="project" value="UniProtKB-UniPathway"/>
</dbReference>
<dbReference type="GO" id="GO:0006229">
    <property type="term" value="P:dUTP biosynthetic process"/>
    <property type="evidence" value="ECO:0007669"/>
    <property type="project" value="UniProtKB-UniRule"/>
</dbReference>
<dbReference type="GO" id="GO:0015949">
    <property type="term" value="P:nucleobase-containing small molecule interconversion"/>
    <property type="evidence" value="ECO:0000318"/>
    <property type="project" value="GO_Central"/>
</dbReference>
<dbReference type="CDD" id="cd07557">
    <property type="entry name" value="trimeric_dUTPase"/>
    <property type="match status" value="1"/>
</dbReference>
<dbReference type="FunFam" id="2.70.40.10:FF:000001">
    <property type="entry name" value="dCTP deaminase"/>
    <property type="match status" value="1"/>
</dbReference>
<dbReference type="Gene3D" id="2.70.40.10">
    <property type="match status" value="1"/>
</dbReference>
<dbReference type="HAMAP" id="MF_00146">
    <property type="entry name" value="dCTP_deaminase"/>
    <property type="match status" value="1"/>
</dbReference>
<dbReference type="InterPro" id="IPR011962">
    <property type="entry name" value="dCTP_deaminase"/>
</dbReference>
<dbReference type="InterPro" id="IPR036157">
    <property type="entry name" value="dUTPase-like_sf"/>
</dbReference>
<dbReference type="InterPro" id="IPR033704">
    <property type="entry name" value="dUTPase_trimeric"/>
</dbReference>
<dbReference type="NCBIfam" id="TIGR02274">
    <property type="entry name" value="dCTP_deam"/>
    <property type="match status" value="1"/>
</dbReference>
<dbReference type="PANTHER" id="PTHR42680">
    <property type="entry name" value="DCTP DEAMINASE"/>
    <property type="match status" value="1"/>
</dbReference>
<dbReference type="PANTHER" id="PTHR42680:SF3">
    <property type="entry name" value="DCTP DEAMINASE"/>
    <property type="match status" value="1"/>
</dbReference>
<dbReference type="Pfam" id="PF22769">
    <property type="entry name" value="DCD"/>
    <property type="match status" value="1"/>
</dbReference>
<dbReference type="SUPFAM" id="SSF51283">
    <property type="entry name" value="dUTPase-like"/>
    <property type="match status" value="1"/>
</dbReference>
<evidence type="ECO:0000255" key="1">
    <source>
        <dbReference type="HAMAP-Rule" id="MF_00146"/>
    </source>
</evidence>
<accession>P63904</accession>
<accession>Q9JRE8</accession>
<comment type="function">
    <text evidence="1">Catalyzes the deamination of dCTP to dUTP.</text>
</comment>
<comment type="catalytic activity">
    <reaction evidence="1">
        <text>dCTP + H2O + H(+) = dUTP + NH4(+)</text>
        <dbReference type="Rhea" id="RHEA:22680"/>
        <dbReference type="ChEBI" id="CHEBI:15377"/>
        <dbReference type="ChEBI" id="CHEBI:15378"/>
        <dbReference type="ChEBI" id="CHEBI:28938"/>
        <dbReference type="ChEBI" id="CHEBI:61481"/>
        <dbReference type="ChEBI" id="CHEBI:61555"/>
        <dbReference type="EC" id="3.5.4.13"/>
    </reaction>
</comment>
<comment type="pathway">
    <text evidence="1">Pyrimidine metabolism; dUMP biosynthesis; dUMP from dCTP (dUTP route): step 1/2.</text>
</comment>
<comment type="subunit">
    <text evidence="1">Homotrimer.</text>
</comment>
<comment type="similarity">
    <text evidence="1">Belongs to the dCTP deaminase family.</text>
</comment>
<keyword id="KW-0378">Hydrolase</keyword>
<keyword id="KW-0546">Nucleotide metabolism</keyword>
<keyword id="KW-0547">Nucleotide-binding</keyword>
<keyword id="KW-1185">Reference proteome</keyword>
<name>DCD_NEIMB</name>
<sequence>MSIKSDKWIRRMSEEFGMIDPFEPNQIKEADGKRIISYGTSSYGYDIRCANEFKIFTNINSTIVDPKNFDPKNFVTVEDDCCIIPPNSFALARTVEYFRIPRNVLTVCLGKSTYARCGIIVNVTPFEPEWEGYVTLEFSNTTPLPAKIYAGEGVAQVLFFESDEICETSYKDRNGKYMGQTGVTLPKA</sequence>
<protein>
    <recommendedName>
        <fullName evidence="1">dCTP deaminase</fullName>
        <ecNumber evidence="1">3.5.4.13</ecNumber>
    </recommendedName>
    <alternativeName>
        <fullName evidence="1">Deoxycytidine triphosphate deaminase</fullName>
    </alternativeName>
</protein>